<keyword id="KW-0067">ATP-binding</keyword>
<keyword id="KW-0963">Cytoplasm</keyword>
<keyword id="KW-0418">Kinase</keyword>
<keyword id="KW-0460">Magnesium</keyword>
<keyword id="KW-0479">Metal-binding</keyword>
<keyword id="KW-0545">Nucleotide biosynthesis</keyword>
<keyword id="KW-0547">Nucleotide-binding</keyword>
<keyword id="KW-0808">Transferase</keyword>
<sequence>MPDMKLFAGNATPELAQRIADRLYISLGDATVSRFSDGEVAVQINENVRGSDVFIIQSTCAPTNDNLMELVVMIDAMRRASAGRITAVIPYFGYARQDRRVRSARVPITAKVVADFLSNVGVDRVLTIDLHAEQIQGFFDVPVDNIFGTPVLLEDMHARGLEDPVVVSPDLGGVVRARATAKALGDIDIAIVDKRRPRANVSEVMNLIGDVEGRDCVIVDDMIDTGGTLCKAAEALKERGAKRVFAYATHAVFSGNAAKNIKNSVLDQVIVTDSITLSKEMAATGKVTQLTLSGMLAEAIRRISNEESISAMFN</sequence>
<protein>
    <recommendedName>
        <fullName evidence="1">Ribose-phosphate pyrophosphokinase</fullName>
        <shortName evidence="1">RPPK</shortName>
        <ecNumber evidence="1">2.7.6.1</ecNumber>
    </recommendedName>
    <alternativeName>
        <fullName evidence="1">5-phospho-D-ribosyl alpha-1-diphosphate synthase</fullName>
    </alternativeName>
    <alternativeName>
        <fullName evidence="1">Phosphoribosyl diphosphate synthase</fullName>
    </alternativeName>
    <alternativeName>
        <fullName evidence="1">Phosphoribosyl pyrophosphate synthase</fullName>
        <shortName evidence="1">P-Rib-PP synthase</shortName>
        <shortName evidence="1">PRPP synthase</shortName>
        <shortName evidence="1">PRPPase</shortName>
    </alternativeName>
</protein>
<accession>Q8DFF5</accession>
<evidence type="ECO:0000255" key="1">
    <source>
        <dbReference type="HAMAP-Rule" id="MF_00583"/>
    </source>
</evidence>
<gene>
    <name evidence="1" type="primary">prs</name>
    <name type="ordered locus">VV1_0257</name>
</gene>
<feature type="chain" id="PRO_0000141224" description="Ribose-phosphate pyrophosphokinase">
    <location>
        <begin position="1"/>
        <end position="314"/>
    </location>
</feature>
<feature type="active site" evidence="1">
    <location>
        <position position="194"/>
    </location>
</feature>
<feature type="binding site" evidence="1">
    <location>
        <begin position="37"/>
        <end position="39"/>
    </location>
    <ligand>
        <name>ATP</name>
        <dbReference type="ChEBI" id="CHEBI:30616"/>
    </ligand>
</feature>
<feature type="binding site" evidence="1">
    <location>
        <begin position="96"/>
        <end position="97"/>
    </location>
    <ligand>
        <name>ATP</name>
        <dbReference type="ChEBI" id="CHEBI:30616"/>
    </ligand>
</feature>
<feature type="binding site" evidence="1">
    <location>
        <position position="131"/>
    </location>
    <ligand>
        <name>Mg(2+)</name>
        <dbReference type="ChEBI" id="CHEBI:18420"/>
        <label>1</label>
    </ligand>
</feature>
<feature type="binding site" evidence="1">
    <location>
        <position position="170"/>
    </location>
    <ligand>
        <name>Mg(2+)</name>
        <dbReference type="ChEBI" id="CHEBI:18420"/>
        <label>2</label>
    </ligand>
</feature>
<feature type="binding site" evidence="1">
    <location>
        <position position="196"/>
    </location>
    <ligand>
        <name>D-ribose 5-phosphate</name>
        <dbReference type="ChEBI" id="CHEBI:78346"/>
    </ligand>
</feature>
<feature type="binding site" evidence="1">
    <location>
        <position position="220"/>
    </location>
    <ligand>
        <name>D-ribose 5-phosphate</name>
        <dbReference type="ChEBI" id="CHEBI:78346"/>
    </ligand>
</feature>
<feature type="binding site" evidence="1">
    <location>
        <begin position="224"/>
        <end position="228"/>
    </location>
    <ligand>
        <name>D-ribose 5-phosphate</name>
        <dbReference type="ChEBI" id="CHEBI:78346"/>
    </ligand>
</feature>
<dbReference type="EC" id="2.7.6.1" evidence="1"/>
<dbReference type="EMBL" id="AE016795">
    <property type="protein sequence ID" value="AAO08793.2"/>
    <property type="molecule type" value="Genomic_DNA"/>
</dbReference>
<dbReference type="RefSeq" id="WP_011078371.1">
    <property type="nucleotide sequence ID" value="NC_004459.3"/>
</dbReference>
<dbReference type="SMR" id="Q8DFF5"/>
<dbReference type="KEGG" id="vvu:VV1_0257"/>
<dbReference type="HOGENOM" id="CLU_033546_2_0_6"/>
<dbReference type="UniPathway" id="UPA00087">
    <property type="reaction ID" value="UER00172"/>
</dbReference>
<dbReference type="Proteomes" id="UP000002275">
    <property type="component" value="Chromosome 1"/>
</dbReference>
<dbReference type="GO" id="GO:0005737">
    <property type="term" value="C:cytoplasm"/>
    <property type="evidence" value="ECO:0007669"/>
    <property type="project" value="UniProtKB-SubCell"/>
</dbReference>
<dbReference type="GO" id="GO:0002189">
    <property type="term" value="C:ribose phosphate diphosphokinase complex"/>
    <property type="evidence" value="ECO:0007669"/>
    <property type="project" value="TreeGrafter"/>
</dbReference>
<dbReference type="GO" id="GO:0005524">
    <property type="term" value="F:ATP binding"/>
    <property type="evidence" value="ECO:0007669"/>
    <property type="project" value="UniProtKB-KW"/>
</dbReference>
<dbReference type="GO" id="GO:0016301">
    <property type="term" value="F:kinase activity"/>
    <property type="evidence" value="ECO:0007669"/>
    <property type="project" value="UniProtKB-KW"/>
</dbReference>
<dbReference type="GO" id="GO:0000287">
    <property type="term" value="F:magnesium ion binding"/>
    <property type="evidence" value="ECO:0007669"/>
    <property type="project" value="UniProtKB-UniRule"/>
</dbReference>
<dbReference type="GO" id="GO:0004749">
    <property type="term" value="F:ribose phosphate diphosphokinase activity"/>
    <property type="evidence" value="ECO:0007669"/>
    <property type="project" value="UniProtKB-UniRule"/>
</dbReference>
<dbReference type="GO" id="GO:0006015">
    <property type="term" value="P:5-phosphoribose 1-diphosphate biosynthetic process"/>
    <property type="evidence" value="ECO:0007669"/>
    <property type="project" value="UniProtKB-UniRule"/>
</dbReference>
<dbReference type="GO" id="GO:0006164">
    <property type="term" value="P:purine nucleotide biosynthetic process"/>
    <property type="evidence" value="ECO:0007669"/>
    <property type="project" value="TreeGrafter"/>
</dbReference>
<dbReference type="GO" id="GO:0009156">
    <property type="term" value="P:ribonucleoside monophosphate biosynthetic process"/>
    <property type="evidence" value="ECO:0007669"/>
    <property type="project" value="InterPro"/>
</dbReference>
<dbReference type="CDD" id="cd06223">
    <property type="entry name" value="PRTases_typeI"/>
    <property type="match status" value="1"/>
</dbReference>
<dbReference type="FunFam" id="3.40.50.2020:FF:000001">
    <property type="entry name" value="Ribose-phosphate pyrophosphokinase"/>
    <property type="match status" value="1"/>
</dbReference>
<dbReference type="Gene3D" id="3.40.50.2020">
    <property type="match status" value="2"/>
</dbReference>
<dbReference type="HAMAP" id="MF_00583_B">
    <property type="entry name" value="RibP_PPkinase_B"/>
    <property type="match status" value="1"/>
</dbReference>
<dbReference type="InterPro" id="IPR000842">
    <property type="entry name" value="PRib_PP_synth_CS"/>
</dbReference>
<dbReference type="InterPro" id="IPR029099">
    <property type="entry name" value="Pribosyltran_N"/>
</dbReference>
<dbReference type="InterPro" id="IPR000836">
    <property type="entry name" value="PRibTrfase_dom"/>
</dbReference>
<dbReference type="InterPro" id="IPR029057">
    <property type="entry name" value="PRTase-like"/>
</dbReference>
<dbReference type="InterPro" id="IPR005946">
    <property type="entry name" value="Rib-P_diPkinase"/>
</dbReference>
<dbReference type="InterPro" id="IPR037515">
    <property type="entry name" value="Rib-P_diPkinase_bac"/>
</dbReference>
<dbReference type="NCBIfam" id="NF002320">
    <property type="entry name" value="PRK01259.1"/>
    <property type="match status" value="1"/>
</dbReference>
<dbReference type="NCBIfam" id="TIGR01251">
    <property type="entry name" value="ribP_PPkin"/>
    <property type="match status" value="1"/>
</dbReference>
<dbReference type="PANTHER" id="PTHR10210">
    <property type="entry name" value="RIBOSE-PHOSPHATE DIPHOSPHOKINASE FAMILY MEMBER"/>
    <property type="match status" value="1"/>
</dbReference>
<dbReference type="PANTHER" id="PTHR10210:SF41">
    <property type="entry name" value="RIBOSE-PHOSPHATE PYROPHOSPHOKINASE 1, CHLOROPLASTIC"/>
    <property type="match status" value="1"/>
</dbReference>
<dbReference type="Pfam" id="PF14572">
    <property type="entry name" value="Pribosyl_synth"/>
    <property type="match status" value="1"/>
</dbReference>
<dbReference type="Pfam" id="PF13793">
    <property type="entry name" value="Pribosyltran_N"/>
    <property type="match status" value="1"/>
</dbReference>
<dbReference type="SMART" id="SM01400">
    <property type="entry name" value="Pribosyltran_N"/>
    <property type="match status" value="1"/>
</dbReference>
<dbReference type="SUPFAM" id="SSF53271">
    <property type="entry name" value="PRTase-like"/>
    <property type="match status" value="1"/>
</dbReference>
<dbReference type="PROSITE" id="PS00114">
    <property type="entry name" value="PRPP_SYNTHASE"/>
    <property type="match status" value="1"/>
</dbReference>
<reference key="1">
    <citation type="submission" date="2002-12" db="EMBL/GenBank/DDBJ databases">
        <title>Complete genome sequence of Vibrio vulnificus CMCP6.</title>
        <authorList>
            <person name="Rhee J.H."/>
            <person name="Kim S.Y."/>
            <person name="Chung S.S."/>
            <person name="Kim J.J."/>
            <person name="Moon Y.H."/>
            <person name="Jeong H."/>
            <person name="Choy H.E."/>
        </authorList>
    </citation>
    <scope>NUCLEOTIDE SEQUENCE [LARGE SCALE GENOMIC DNA]</scope>
    <source>
        <strain>CMCP6</strain>
    </source>
</reference>
<comment type="function">
    <text evidence="1">Involved in the biosynthesis of the central metabolite phospho-alpha-D-ribosyl-1-pyrophosphate (PRPP) via the transfer of pyrophosphoryl group from ATP to 1-hydroxyl of ribose-5-phosphate (Rib-5-P).</text>
</comment>
<comment type="catalytic activity">
    <reaction evidence="1">
        <text>D-ribose 5-phosphate + ATP = 5-phospho-alpha-D-ribose 1-diphosphate + AMP + H(+)</text>
        <dbReference type="Rhea" id="RHEA:15609"/>
        <dbReference type="ChEBI" id="CHEBI:15378"/>
        <dbReference type="ChEBI" id="CHEBI:30616"/>
        <dbReference type="ChEBI" id="CHEBI:58017"/>
        <dbReference type="ChEBI" id="CHEBI:78346"/>
        <dbReference type="ChEBI" id="CHEBI:456215"/>
        <dbReference type="EC" id="2.7.6.1"/>
    </reaction>
</comment>
<comment type="cofactor">
    <cofactor evidence="1">
        <name>Mg(2+)</name>
        <dbReference type="ChEBI" id="CHEBI:18420"/>
    </cofactor>
    <text evidence="1">Binds 2 Mg(2+) ions per subunit.</text>
</comment>
<comment type="pathway">
    <text evidence="1">Metabolic intermediate biosynthesis; 5-phospho-alpha-D-ribose 1-diphosphate biosynthesis; 5-phospho-alpha-D-ribose 1-diphosphate from D-ribose 5-phosphate (route I): step 1/1.</text>
</comment>
<comment type="subunit">
    <text evidence="1">Homohexamer.</text>
</comment>
<comment type="subcellular location">
    <subcellularLocation>
        <location evidence="1">Cytoplasm</location>
    </subcellularLocation>
</comment>
<comment type="similarity">
    <text evidence="1">Belongs to the ribose-phosphate pyrophosphokinase family. Class I subfamily.</text>
</comment>
<name>KPRS_VIBVU</name>
<organism>
    <name type="scientific">Vibrio vulnificus (strain CMCP6)</name>
    <dbReference type="NCBI Taxonomy" id="216895"/>
    <lineage>
        <taxon>Bacteria</taxon>
        <taxon>Pseudomonadati</taxon>
        <taxon>Pseudomonadota</taxon>
        <taxon>Gammaproteobacteria</taxon>
        <taxon>Vibrionales</taxon>
        <taxon>Vibrionaceae</taxon>
        <taxon>Vibrio</taxon>
    </lineage>
</organism>
<proteinExistence type="inferred from homology"/>